<name>RL30_CLOBH</name>
<comment type="subunit">
    <text evidence="1">Part of the 50S ribosomal subunit.</text>
</comment>
<comment type="similarity">
    <text evidence="1">Belongs to the universal ribosomal protein uL30 family.</text>
</comment>
<keyword id="KW-1185">Reference proteome</keyword>
<keyword id="KW-0687">Ribonucleoprotein</keyword>
<keyword id="KW-0689">Ribosomal protein</keyword>
<dbReference type="EMBL" id="CP000727">
    <property type="protein sequence ID" value="ABS36301.1"/>
    <property type="molecule type" value="Genomic_DNA"/>
</dbReference>
<dbReference type="EMBL" id="AM412317">
    <property type="protein sequence ID" value="CAL85023.1"/>
    <property type="molecule type" value="Genomic_DNA"/>
</dbReference>
<dbReference type="RefSeq" id="WP_003357637.1">
    <property type="nucleotide sequence ID" value="NC_009698.1"/>
</dbReference>
<dbReference type="RefSeq" id="YP_001255944.1">
    <property type="nucleotide sequence ID" value="NC_009495.1"/>
</dbReference>
<dbReference type="RefSeq" id="YP_001389185.1">
    <property type="nucleotide sequence ID" value="NC_009698.1"/>
</dbReference>
<dbReference type="SMR" id="A5I7I8"/>
<dbReference type="GeneID" id="92940232"/>
<dbReference type="KEGG" id="cbh:CLC_3407"/>
<dbReference type="KEGG" id="cbo:CBO3463"/>
<dbReference type="PATRIC" id="fig|413999.7.peg.3439"/>
<dbReference type="HOGENOM" id="CLU_131047_2_1_9"/>
<dbReference type="PRO" id="PR:A5I7I8"/>
<dbReference type="Proteomes" id="UP000001986">
    <property type="component" value="Chromosome"/>
</dbReference>
<dbReference type="GO" id="GO:0022625">
    <property type="term" value="C:cytosolic large ribosomal subunit"/>
    <property type="evidence" value="ECO:0000318"/>
    <property type="project" value="GO_Central"/>
</dbReference>
<dbReference type="GO" id="GO:0003735">
    <property type="term" value="F:structural constituent of ribosome"/>
    <property type="evidence" value="ECO:0007669"/>
    <property type="project" value="InterPro"/>
</dbReference>
<dbReference type="GO" id="GO:0006412">
    <property type="term" value="P:translation"/>
    <property type="evidence" value="ECO:0007669"/>
    <property type="project" value="UniProtKB-UniRule"/>
</dbReference>
<dbReference type="CDD" id="cd01658">
    <property type="entry name" value="Ribosomal_L30"/>
    <property type="match status" value="1"/>
</dbReference>
<dbReference type="FunFam" id="3.30.1390.20:FF:000001">
    <property type="entry name" value="50S ribosomal protein L30"/>
    <property type="match status" value="1"/>
</dbReference>
<dbReference type="Gene3D" id="3.30.1390.20">
    <property type="entry name" value="Ribosomal protein L30, ferredoxin-like fold domain"/>
    <property type="match status" value="1"/>
</dbReference>
<dbReference type="HAMAP" id="MF_01371_B">
    <property type="entry name" value="Ribosomal_uL30_B"/>
    <property type="match status" value="1"/>
</dbReference>
<dbReference type="InterPro" id="IPR036919">
    <property type="entry name" value="Ribo_uL30_ferredoxin-like_sf"/>
</dbReference>
<dbReference type="InterPro" id="IPR005996">
    <property type="entry name" value="Ribosomal_uL30_bac-type"/>
</dbReference>
<dbReference type="InterPro" id="IPR016082">
    <property type="entry name" value="Ribosomal_uL30_ferredoxin-like"/>
</dbReference>
<dbReference type="NCBIfam" id="TIGR01308">
    <property type="entry name" value="rpmD_bact"/>
    <property type="match status" value="1"/>
</dbReference>
<dbReference type="PANTHER" id="PTHR15892:SF2">
    <property type="entry name" value="LARGE RIBOSOMAL SUBUNIT PROTEIN UL30M"/>
    <property type="match status" value="1"/>
</dbReference>
<dbReference type="PANTHER" id="PTHR15892">
    <property type="entry name" value="MITOCHONDRIAL RIBOSOMAL PROTEIN L30"/>
    <property type="match status" value="1"/>
</dbReference>
<dbReference type="Pfam" id="PF00327">
    <property type="entry name" value="Ribosomal_L30"/>
    <property type="match status" value="1"/>
</dbReference>
<dbReference type="PIRSF" id="PIRSF002211">
    <property type="entry name" value="Ribosomal_L30_bac-type"/>
    <property type="match status" value="1"/>
</dbReference>
<dbReference type="SUPFAM" id="SSF55129">
    <property type="entry name" value="Ribosomal protein L30p/L7e"/>
    <property type="match status" value="1"/>
</dbReference>
<organism>
    <name type="scientific">Clostridium botulinum (strain Hall / ATCC 3502 / NCTC 13319 / Type A)</name>
    <dbReference type="NCBI Taxonomy" id="441771"/>
    <lineage>
        <taxon>Bacteria</taxon>
        <taxon>Bacillati</taxon>
        <taxon>Bacillota</taxon>
        <taxon>Clostridia</taxon>
        <taxon>Eubacteriales</taxon>
        <taxon>Clostridiaceae</taxon>
        <taxon>Clostridium</taxon>
    </lineage>
</organism>
<proteinExistence type="inferred from homology"/>
<feature type="chain" id="PRO_1000056029" description="Large ribosomal subunit protein uL30">
    <location>
        <begin position="1"/>
        <end position="59"/>
    </location>
</feature>
<sequence length="59" mass="6504">MAKVKITLVKSLIGRKKDQIATVNALGLKKIGNIVEHEETPQISGMIKKVSYLLKVEEA</sequence>
<accession>A5I7I8</accession>
<accession>A7G8S0</accession>
<gene>
    <name evidence="1" type="primary">rpmD</name>
    <name type="ordered locus">CBO3463</name>
    <name type="ordered locus">CLC_3407</name>
</gene>
<evidence type="ECO:0000255" key="1">
    <source>
        <dbReference type="HAMAP-Rule" id="MF_01371"/>
    </source>
</evidence>
<evidence type="ECO:0000305" key="2"/>
<reference key="1">
    <citation type="journal article" date="2007" name="Genome Res.">
        <title>Genome sequence of a proteolytic (Group I) Clostridium botulinum strain Hall A and comparative analysis of the clostridial genomes.</title>
        <authorList>
            <person name="Sebaihia M."/>
            <person name="Peck M.W."/>
            <person name="Minton N.P."/>
            <person name="Thomson N.R."/>
            <person name="Holden M.T.G."/>
            <person name="Mitchell W.J."/>
            <person name="Carter A.T."/>
            <person name="Bentley S.D."/>
            <person name="Mason D.R."/>
            <person name="Crossman L."/>
            <person name="Paul C.J."/>
            <person name="Ivens A."/>
            <person name="Wells-Bennik M.H.J."/>
            <person name="Davis I.J."/>
            <person name="Cerdeno-Tarraga A.M."/>
            <person name="Churcher C."/>
            <person name="Quail M.A."/>
            <person name="Chillingworth T."/>
            <person name="Feltwell T."/>
            <person name="Fraser A."/>
            <person name="Goodhead I."/>
            <person name="Hance Z."/>
            <person name="Jagels K."/>
            <person name="Larke N."/>
            <person name="Maddison M."/>
            <person name="Moule S."/>
            <person name="Mungall K."/>
            <person name="Norbertczak H."/>
            <person name="Rabbinowitsch E."/>
            <person name="Sanders M."/>
            <person name="Simmonds M."/>
            <person name="White B."/>
            <person name="Whithead S."/>
            <person name="Parkhill J."/>
        </authorList>
    </citation>
    <scope>NUCLEOTIDE SEQUENCE [LARGE SCALE GENOMIC DNA]</scope>
    <source>
        <strain>Hall / ATCC 3502 / NCTC 13319 / Type A</strain>
    </source>
</reference>
<reference key="2">
    <citation type="journal article" date="2007" name="PLoS ONE">
        <title>Analysis of the neurotoxin complex genes in Clostridium botulinum A1-A4 and B1 strains: BoNT/A3, /Ba4 and /B1 clusters are located within plasmids.</title>
        <authorList>
            <person name="Smith T.J."/>
            <person name="Hill K.K."/>
            <person name="Foley B.T."/>
            <person name="Detter J.C."/>
            <person name="Munk A.C."/>
            <person name="Bruce D.C."/>
            <person name="Doggett N.A."/>
            <person name="Smith L.A."/>
            <person name="Marks J.D."/>
            <person name="Xie G."/>
            <person name="Brettin T.S."/>
        </authorList>
    </citation>
    <scope>NUCLEOTIDE SEQUENCE [LARGE SCALE GENOMIC DNA]</scope>
    <source>
        <strain>Hall / ATCC 3502 / NCTC 13319 / Type A</strain>
    </source>
</reference>
<protein>
    <recommendedName>
        <fullName evidence="1">Large ribosomal subunit protein uL30</fullName>
    </recommendedName>
    <alternativeName>
        <fullName evidence="2">50S ribosomal protein L30</fullName>
    </alternativeName>
</protein>